<protein>
    <recommendedName>
        <fullName evidence="1">Crossover junction endodeoxyribonuclease RuvC</fullName>
        <ecNumber evidence="1">3.1.21.10</ecNumber>
    </recommendedName>
    <alternativeName>
        <fullName evidence="1">Holliday junction nuclease RuvC</fullName>
    </alternativeName>
    <alternativeName>
        <fullName evidence="1">Holliday junction resolvase RuvC</fullName>
    </alternativeName>
</protein>
<gene>
    <name evidence="1" type="primary">ruvC</name>
    <name type="ordered locus">TPASS_0517</name>
</gene>
<proteinExistence type="inferred from homology"/>
<evidence type="ECO:0000255" key="1">
    <source>
        <dbReference type="HAMAP-Rule" id="MF_00034"/>
    </source>
</evidence>
<feature type="chain" id="PRO_1000090570" description="Crossover junction endodeoxyribonuclease RuvC">
    <location>
        <begin position="1"/>
        <end position="196"/>
    </location>
</feature>
<feature type="active site" evidence="1">
    <location>
        <position position="23"/>
    </location>
</feature>
<feature type="active site" evidence="1">
    <location>
        <position position="83"/>
    </location>
</feature>
<feature type="active site" evidence="1">
    <location>
        <position position="156"/>
    </location>
</feature>
<feature type="binding site" evidence="1">
    <location>
        <position position="23"/>
    </location>
    <ligand>
        <name>Mg(2+)</name>
        <dbReference type="ChEBI" id="CHEBI:18420"/>
        <label>1</label>
    </ligand>
</feature>
<feature type="binding site" evidence="1">
    <location>
        <position position="83"/>
    </location>
    <ligand>
        <name>Mg(2+)</name>
        <dbReference type="ChEBI" id="CHEBI:18420"/>
        <label>2</label>
    </ligand>
</feature>
<feature type="binding site" evidence="1">
    <location>
        <position position="156"/>
    </location>
    <ligand>
        <name>Mg(2+)</name>
        <dbReference type="ChEBI" id="CHEBI:18420"/>
        <label>1</label>
    </ligand>
</feature>
<reference key="1">
    <citation type="journal article" date="2008" name="BMC Microbiol.">
        <title>Complete genome sequence of Treponema pallidum ssp. pallidum strain SS14 determined with oligonucleotide arrays.</title>
        <authorList>
            <person name="Matejkova P."/>
            <person name="Strouhal M."/>
            <person name="Smajs D."/>
            <person name="Norris S.J."/>
            <person name="Palzkill T."/>
            <person name="Petrosino J.F."/>
            <person name="Sodergren E."/>
            <person name="Norton J.E."/>
            <person name="Singh J."/>
            <person name="Richmond T.A."/>
            <person name="Molla M.N."/>
            <person name="Albert T.J."/>
            <person name="Weinstock G.M."/>
        </authorList>
    </citation>
    <scope>NUCLEOTIDE SEQUENCE [LARGE SCALE GENOMIC DNA]</scope>
    <source>
        <strain>SS14</strain>
    </source>
</reference>
<comment type="function">
    <text evidence="1">The RuvA-RuvB-RuvC complex processes Holliday junction (HJ) DNA during genetic recombination and DNA repair. Endonuclease that resolves HJ intermediates. Cleaves cruciform DNA by making single-stranded nicks across the HJ at symmetrical positions within the homologous arms, yielding a 5'-phosphate and a 3'-hydroxyl group; requires a central core of homology in the junction. The consensus cleavage sequence is 5'-(A/T)TT(C/G)-3'. Cleavage occurs on the 3'-side of the TT dinucleotide at the point of strand exchange. HJ branch migration catalyzed by RuvA-RuvB allows RuvC to scan DNA until it finds its consensus sequence, where it cleaves and resolves the cruciform DNA.</text>
</comment>
<comment type="catalytic activity">
    <reaction evidence="1">
        <text>Endonucleolytic cleavage at a junction such as a reciprocal single-stranded crossover between two homologous DNA duplexes (Holliday junction).</text>
        <dbReference type="EC" id="3.1.21.10"/>
    </reaction>
</comment>
<comment type="cofactor">
    <cofactor evidence="1">
        <name>Mg(2+)</name>
        <dbReference type="ChEBI" id="CHEBI:18420"/>
    </cofactor>
    <text evidence="1">Binds 2 Mg(2+) ion per subunit.</text>
</comment>
<comment type="subunit">
    <text evidence="1">Homodimer which binds Holliday junction (HJ) DNA. The HJ becomes 2-fold symmetrical on binding to RuvC with unstacked arms; it has a different conformation from HJ DNA in complex with RuvA. In the full resolvosome a probable DNA-RuvA(4)-RuvB(12)-RuvC(2) complex forms which resolves the HJ.</text>
</comment>
<comment type="subcellular location">
    <subcellularLocation>
        <location evidence="1">Cytoplasm</location>
    </subcellularLocation>
</comment>
<comment type="similarity">
    <text evidence="1">Belongs to the RuvC family.</text>
</comment>
<sequence length="196" mass="20942">MHAQNVDIAPGSTSTVSIIVGIDPGLESTGYGVIEAGGGSLRCLTYGVIVTQSNQPSAARLRHIFDTLQQVISIYQPQYCAVETIYFAKNVTSALCVAQARGVVLLAMAQQHISVAEYAPNAIKKAITGIAQAEKRQVQHLVKILLNLKDIPHPDHAADALAVAVTHVHCCMSSNYAVGSTRSRGAYVTLYKKGKR</sequence>
<dbReference type="EC" id="3.1.21.10" evidence="1"/>
<dbReference type="EMBL" id="CP000805">
    <property type="protein sequence ID" value="ACD70940.1"/>
    <property type="molecule type" value="Genomic_DNA"/>
</dbReference>
<dbReference type="RefSeq" id="WP_010881966.1">
    <property type="nucleotide sequence ID" value="NC_021508.1"/>
</dbReference>
<dbReference type="SMR" id="B2S3B1"/>
<dbReference type="GeneID" id="93876286"/>
<dbReference type="KEGG" id="tpp:TPASS_0517"/>
<dbReference type="PATRIC" id="fig|455434.6.peg.514"/>
<dbReference type="Proteomes" id="UP000001202">
    <property type="component" value="Chromosome"/>
</dbReference>
<dbReference type="GO" id="GO:0005737">
    <property type="term" value="C:cytoplasm"/>
    <property type="evidence" value="ECO:0007669"/>
    <property type="project" value="UniProtKB-SubCell"/>
</dbReference>
<dbReference type="GO" id="GO:0048476">
    <property type="term" value="C:Holliday junction resolvase complex"/>
    <property type="evidence" value="ECO:0007669"/>
    <property type="project" value="UniProtKB-UniRule"/>
</dbReference>
<dbReference type="GO" id="GO:0008821">
    <property type="term" value="F:crossover junction DNA endonuclease activity"/>
    <property type="evidence" value="ECO:0007669"/>
    <property type="project" value="UniProtKB-UniRule"/>
</dbReference>
<dbReference type="GO" id="GO:0003677">
    <property type="term" value="F:DNA binding"/>
    <property type="evidence" value="ECO:0007669"/>
    <property type="project" value="UniProtKB-KW"/>
</dbReference>
<dbReference type="GO" id="GO:0000287">
    <property type="term" value="F:magnesium ion binding"/>
    <property type="evidence" value="ECO:0007669"/>
    <property type="project" value="UniProtKB-UniRule"/>
</dbReference>
<dbReference type="GO" id="GO:0006310">
    <property type="term" value="P:DNA recombination"/>
    <property type="evidence" value="ECO:0007669"/>
    <property type="project" value="UniProtKB-UniRule"/>
</dbReference>
<dbReference type="GO" id="GO:0006281">
    <property type="term" value="P:DNA repair"/>
    <property type="evidence" value="ECO:0007669"/>
    <property type="project" value="UniProtKB-UniRule"/>
</dbReference>
<dbReference type="CDD" id="cd16962">
    <property type="entry name" value="RuvC"/>
    <property type="match status" value="1"/>
</dbReference>
<dbReference type="FunFam" id="3.30.420.10:FF:000002">
    <property type="entry name" value="Crossover junction endodeoxyribonuclease RuvC"/>
    <property type="match status" value="1"/>
</dbReference>
<dbReference type="Gene3D" id="3.30.420.10">
    <property type="entry name" value="Ribonuclease H-like superfamily/Ribonuclease H"/>
    <property type="match status" value="1"/>
</dbReference>
<dbReference type="HAMAP" id="MF_00034">
    <property type="entry name" value="RuvC"/>
    <property type="match status" value="1"/>
</dbReference>
<dbReference type="InterPro" id="IPR012337">
    <property type="entry name" value="RNaseH-like_sf"/>
</dbReference>
<dbReference type="InterPro" id="IPR036397">
    <property type="entry name" value="RNaseH_sf"/>
</dbReference>
<dbReference type="InterPro" id="IPR002176">
    <property type="entry name" value="X-over_junc_endoDNase_RuvC"/>
</dbReference>
<dbReference type="NCBIfam" id="NF000711">
    <property type="entry name" value="PRK00039.2-1"/>
    <property type="match status" value="1"/>
</dbReference>
<dbReference type="NCBIfam" id="TIGR00228">
    <property type="entry name" value="ruvC"/>
    <property type="match status" value="1"/>
</dbReference>
<dbReference type="PANTHER" id="PTHR30194">
    <property type="entry name" value="CROSSOVER JUNCTION ENDODEOXYRIBONUCLEASE RUVC"/>
    <property type="match status" value="1"/>
</dbReference>
<dbReference type="PANTHER" id="PTHR30194:SF3">
    <property type="entry name" value="CROSSOVER JUNCTION ENDODEOXYRIBONUCLEASE RUVC"/>
    <property type="match status" value="1"/>
</dbReference>
<dbReference type="Pfam" id="PF02075">
    <property type="entry name" value="RuvC"/>
    <property type="match status" value="1"/>
</dbReference>
<dbReference type="PRINTS" id="PR00696">
    <property type="entry name" value="RSOLVASERUVC"/>
</dbReference>
<dbReference type="SUPFAM" id="SSF53098">
    <property type="entry name" value="Ribonuclease H-like"/>
    <property type="match status" value="1"/>
</dbReference>
<keyword id="KW-0963">Cytoplasm</keyword>
<keyword id="KW-0227">DNA damage</keyword>
<keyword id="KW-0233">DNA recombination</keyword>
<keyword id="KW-0234">DNA repair</keyword>
<keyword id="KW-0238">DNA-binding</keyword>
<keyword id="KW-0255">Endonuclease</keyword>
<keyword id="KW-0378">Hydrolase</keyword>
<keyword id="KW-0460">Magnesium</keyword>
<keyword id="KW-0479">Metal-binding</keyword>
<keyword id="KW-0540">Nuclease</keyword>
<organism>
    <name type="scientific">Treponema pallidum subsp. pallidum (strain SS14)</name>
    <dbReference type="NCBI Taxonomy" id="455434"/>
    <lineage>
        <taxon>Bacteria</taxon>
        <taxon>Pseudomonadati</taxon>
        <taxon>Spirochaetota</taxon>
        <taxon>Spirochaetia</taxon>
        <taxon>Spirochaetales</taxon>
        <taxon>Treponemataceae</taxon>
        <taxon>Treponema</taxon>
    </lineage>
</organism>
<accession>B2S3B1</accession>
<name>RUVC_TREPS</name>